<comment type="function">
    <text evidence="1">Involved in the biosynthesis of branched-chain amino acids (BCAA). Catalyzes an alkyl-migration followed by a ketol-acid reduction of (S)-2-acetolactate (S2AL) to yield (R)-2,3-dihydroxy-isovalerate. In the isomerase reaction, S2AL is rearranged via a Mg-dependent methyl migration to produce 3-hydroxy-3-methyl-2-ketobutyrate (HMKB). In the reductase reaction, this 2-ketoacid undergoes a metal-dependent reduction by NADPH to yield (R)-2,3-dihydroxy-isovalerate.</text>
</comment>
<comment type="catalytic activity">
    <reaction evidence="1">
        <text>(2R)-2,3-dihydroxy-3-methylbutanoate + NADP(+) = (2S)-2-acetolactate + NADPH + H(+)</text>
        <dbReference type="Rhea" id="RHEA:22068"/>
        <dbReference type="ChEBI" id="CHEBI:15378"/>
        <dbReference type="ChEBI" id="CHEBI:49072"/>
        <dbReference type="ChEBI" id="CHEBI:57783"/>
        <dbReference type="ChEBI" id="CHEBI:58349"/>
        <dbReference type="ChEBI" id="CHEBI:58476"/>
        <dbReference type="EC" id="1.1.1.86"/>
    </reaction>
</comment>
<comment type="catalytic activity">
    <reaction evidence="1">
        <text>(2R,3R)-2,3-dihydroxy-3-methylpentanoate + NADP(+) = (S)-2-ethyl-2-hydroxy-3-oxobutanoate + NADPH + H(+)</text>
        <dbReference type="Rhea" id="RHEA:13493"/>
        <dbReference type="ChEBI" id="CHEBI:15378"/>
        <dbReference type="ChEBI" id="CHEBI:49256"/>
        <dbReference type="ChEBI" id="CHEBI:49258"/>
        <dbReference type="ChEBI" id="CHEBI:57783"/>
        <dbReference type="ChEBI" id="CHEBI:58349"/>
        <dbReference type="EC" id="1.1.1.86"/>
    </reaction>
</comment>
<comment type="cofactor">
    <cofactor evidence="1">
        <name>Mg(2+)</name>
        <dbReference type="ChEBI" id="CHEBI:18420"/>
    </cofactor>
    <text evidence="1">Binds 2 magnesium ions per subunit.</text>
</comment>
<comment type="pathway">
    <text evidence="1">Amino-acid biosynthesis; L-isoleucine biosynthesis; L-isoleucine from 2-oxobutanoate: step 2/4.</text>
</comment>
<comment type="pathway">
    <text evidence="1">Amino-acid biosynthesis; L-valine biosynthesis; L-valine from pyruvate: step 2/4.</text>
</comment>
<comment type="similarity">
    <text evidence="1">Belongs to the ketol-acid reductoisomerase family.</text>
</comment>
<gene>
    <name evidence="1" type="primary">ilvC</name>
    <name type="ordered locus">RHA1_ro06488</name>
</gene>
<feature type="chain" id="PRO_0000252778" description="Ketol-acid reductoisomerase (NADP(+))">
    <location>
        <begin position="1"/>
        <end position="337"/>
    </location>
</feature>
<feature type="domain" description="KARI N-terminal Rossmann" evidence="2">
    <location>
        <begin position="3"/>
        <end position="183"/>
    </location>
</feature>
<feature type="domain" description="KARI C-terminal knotted" evidence="3">
    <location>
        <begin position="184"/>
        <end position="329"/>
    </location>
</feature>
<feature type="active site" evidence="1">
    <location>
        <position position="109"/>
    </location>
</feature>
<feature type="binding site" evidence="1">
    <location>
        <begin position="26"/>
        <end position="29"/>
    </location>
    <ligand>
        <name>NADP(+)</name>
        <dbReference type="ChEBI" id="CHEBI:58349"/>
    </ligand>
</feature>
<feature type="binding site" evidence="1">
    <location>
        <position position="49"/>
    </location>
    <ligand>
        <name>NADP(+)</name>
        <dbReference type="ChEBI" id="CHEBI:58349"/>
    </ligand>
</feature>
<feature type="binding site" evidence="1">
    <location>
        <position position="52"/>
    </location>
    <ligand>
        <name>NADP(+)</name>
        <dbReference type="ChEBI" id="CHEBI:58349"/>
    </ligand>
</feature>
<feature type="binding site" evidence="1">
    <location>
        <position position="54"/>
    </location>
    <ligand>
        <name>NADP(+)</name>
        <dbReference type="ChEBI" id="CHEBI:58349"/>
    </ligand>
</feature>
<feature type="binding site" evidence="1">
    <location>
        <begin position="84"/>
        <end position="87"/>
    </location>
    <ligand>
        <name>NADP(+)</name>
        <dbReference type="ChEBI" id="CHEBI:58349"/>
    </ligand>
</feature>
<feature type="binding site" evidence="1">
    <location>
        <position position="135"/>
    </location>
    <ligand>
        <name>NADP(+)</name>
        <dbReference type="ChEBI" id="CHEBI:58349"/>
    </ligand>
</feature>
<feature type="binding site" evidence="1">
    <location>
        <position position="192"/>
    </location>
    <ligand>
        <name>Mg(2+)</name>
        <dbReference type="ChEBI" id="CHEBI:18420"/>
        <label>1</label>
    </ligand>
</feature>
<feature type="binding site" evidence="1">
    <location>
        <position position="192"/>
    </location>
    <ligand>
        <name>Mg(2+)</name>
        <dbReference type="ChEBI" id="CHEBI:18420"/>
        <label>2</label>
    </ligand>
</feature>
<feature type="binding site" evidence="1">
    <location>
        <position position="196"/>
    </location>
    <ligand>
        <name>Mg(2+)</name>
        <dbReference type="ChEBI" id="CHEBI:18420"/>
        <label>1</label>
    </ligand>
</feature>
<feature type="binding site" evidence="1">
    <location>
        <position position="228"/>
    </location>
    <ligand>
        <name>Mg(2+)</name>
        <dbReference type="ChEBI" id="CHEBI:18420"/>
        <label>2</label>
    </ligand>
</feature>
<feature type="binding site" evidence="1">
    <location>
        <position position="232"/>
    </location>
    <ligand>
        <name>Mg(2+)</name>
        <dbReference type="ChEBI" id="CHEBI:18420"/>
        <label>2</label>
    </ligand>
</feature>
<feature type="binding site" evidence="1">
    <location>
        <position position="253"/>
    </location>
    <ligand>
        <name>substrate</name>
    </ligand>
</feature>
<dbReference type="EC" id="1.1.1.86" evidence="1"/>
<dbReference type="EMBL" id="CP000431">
    <property type="protein sequence ID" value="ABG98263.1"/>
    <property type="molecule type" value="Genomic_DNA"/>
</dbReference>
<dbReference type="SMR" id="Q0S2H3"/>
<dbReference type="KEGG" id="rha:RHA1_ro06488"/>
<dbReference type="eggNOG" id="COG0059">
    <property type="taxonomic scope" value="Bacteria"/>
</dbReference>
<dbReference type="HOGENOM" id="CLU_033821_0_1_11"/>
<dbReference type="OrthoDB" id="9804088at2"/>
<dbReference type="UniPathway" id="UPA00047">
    <property type="reaction ID" value="UER00056"/>
</dbReference>
<dbReference type="UniPathway" id="UPA00049">
    <property type="reaction ID" value="UER00060"/>
</dbReference>
<dbReference type="Proteomes" id="UP000008710">
    <property type="component" value="Chromosome"/>
</dbReference>
<dbReference type="GO" id="GO:0005829">
    <property type="term" value="C:cytosol"/>
    <property type="evidence" value="ECO:0007669"/>
    <property type="project" value="TreeGrafter"/>
</dbReference>
<dbReference type="GO" id="GO:0004455">
    <property type="term" value="F:ketol-acid reductoisomerase activity"/>
    <property type="evidence" value="ECO:0007669"/>
    <property type="project" value="UniProtKB-UniRule"/>
</dbReference>
<dbReference type="GO" id="GO:0000287">
    <property type="term" value="F:magnesium ion binding"/>
    <property type="evidence" value="ECO:0007669"/>
    <property type="project" value="UniProtKB-UniRule"/>
</dbReference>
<dbReference type="GO" id="GO:0050661">
    <property type="term" value="F:NADP binding"/>
    <property type="evidence" value="ECO:0007669"/>
    <property type="project" value="InterPro"/>
</dbReference>
<dbReference type="GO" id="GO:0009097">
    <property type="term" value="P:isoleucine biosynthetic process"/>
    <property type="evidence" value="ECO:0007669"/>
    <property type="project" value="UniProtKB-UniRule"/>
</dbReference>
<dbReference type="GO" id="GO:0009099">
    <property type="term" value="P:L-valine biosynthetic process"/>
    <property type="evidence" value="ECO:0007669"/>
    <property type="project" value="UniProtKB-UniRule"/>
</dbReference>
<dbReference type="FunFam" id="3.40.50.720:FF:000023">
    <property type="entry name" value="Ketol-acid reductoisomerase (NADP(+))"/>
    <property type="match status" value="1"/>
</dbReference>
<dbReference type="Gene3D" id="6.10.240.10">
    <property type="match status" value="1"/>
</dbReference>
<dbReference type="Gene3D" id="3.40.50.720">
    <property type="entry name" value="NAD(P)-binding Rossmann-like Domain"/>
    <property type="match status" value="1"/>
</dbReference>
<dbReference type="HAMAP" id="MF_00435">
    <property type="entry name" value="IlvC"/>
    <property type="match status" value="1"/>
</dbReference>
<dbReference type="InterPro" id="IPR008927">
    <property type="entry name" value="6-PGluconate_DH-like_C_sf"/>
</dbReference>
<dbReference type="InterPro" id="IPR013023">
    <property type="entry name" value="KARI"/>
</dbReference>
<dbReference type="InterPro" id="IPR000506">
    <property type="entry name" value="KARI_C"/>
</dbReference>
<dbReference type="InterPro" id="IPR013116">
    <property type="entry name" value="KARI_N"/>
</dbReference>
<dbReference type="InterPro" id="IPR014359">
    <property type="entry name" value="KARI_prok"/>
</dbReference>
<dbReference type="InterPro" id="IPR036291">
    <property type="entry name" value="NAD(P)-bd_dom_sf"/>
</dbReference>
<dbReference type="NCBIfam" id="TIGR00465">
    <property type="entry name" value="ilvC"/>
    <property type="match status" value="1"/>
</dbReference>
<dbReference type="NCBIfam" id="NF004017">
    <property type="entry name" value="PRK05479.1"/>
    <property type="match status" value="1"/>
</dbReference>
<dbReference type="NCBIfam" id="NF009940">
    <property type="entry name" value="PRK13403.1"/>
    <property type="match status" value="1"/>
</dbReference>
<dbReference type="PANTHER" id="PTHR21371">
    <property type="entry name" value="KETOL-ACID REDUCTOISOMERASE, MITOCHONDRIAL"/>
    <property type="match status" value="1"/>
</dbReference>
<dbReference type="PANTHER" id="PTHR21371:SF1">
    <property type="entry name" value="KETOL-ACID REDUCTOISOMERASE, MITOCHONDRIAL"/>
    <property type="match status" value="1"/>
</dbReference>
<dbReference type="Pfam" id="PF01450">
    <property type="entry name" value="KARI_C"/>
    <property type="match status" value="1"/>
</dbReference>
<dbReference type="Pfam" id="PF07991">
    <property type="entry name" value="KARI_N"/>
    <property type="match status" value="1"/>
</dbReference>
<dbReference type="PIRSF" id="PIRSF000116">
    <property type="entry name" value="IlvC_gammaproteo"/>
    <property type="match status" value="1"/>
</dbReference>
<dbReference type="SUPFAM" id="SSF48179">
    <property type="entry name" value="6-phosphogluconate dehydrogenase C-terminal domain-like"/>
    <property type="match status" value="1"/>
</dbReference>
<dbReference type="SUPFAM" id="SSF51735">
    <property type="entry name" value="NAD(P)-binding Rossmann-fold domains"/>
    <property type="match status" value="1"/>
</dbReference>
<dbReference type="PROSITE" id="PS51851">
    <property type="entry name" value="KARI_C"/>
    <property type="match status" value="1"/>
</dbReference>
<dbReference type="PROSITE" id="PS51850">
    <property type="entry name" value="KARI_N"/>
    <property type="match status" value="1"/>
</dbReference>
<accession>Q0S2H3</accession>
<protein>
    <recommendedName>
        <fullName evidence="1">Ketol-acid reductoisomerase (NADP(+))</fullName>
        <shortName evidence="1">KARI</shortName>
        <ecNumber evidence="1">1.1.1.86</ecNumber>
    </recommendedName>
    <alternativeName>
        <fullName evidence="1">Acetohydroxy-acid isomeroreductase</fullName>
        <shortName evidence="1">AHIR</shortName>
    </alternativeName>
    <alternativeName>
        <fullName evidence="1">Alpha-keto-beta-hydroxylacyl reductoisomerase</fullName>
    </alternativeName>
    <alternativeName>
        <fullName evidence="1">Ketol-acid reductoisomerase type 1</fullName>
    </alternativeName>
    <alternativeName>
        <fullName evidence="1">Ketol-acid reductoisomerase type I</fullName>
    </alternativeName>
</protein>
<proteinExistence type="inferred from homology"/>
<sequence length="337" mass="36347">MAVEMFYDDDADLSIIQGRKVAVIGYGSQGHAHSLSLRDSGVDVRIGLKEGSKSRAKAEEQGLTVGTPAEVSEWADVIMVLAPDTAQASIFTNDIEPNLKDGDALFFGHGLNIHFDLIKAPEFVTVGMVAPKGPGHLVRRQFVDGKGVPALIAIDQDPKGEGQALALSYAKGIGGTRAGVIKTTFKEETETDLFGEQAVLCGGTEELVKTGFEVMVEAGYAPEMAYFEVLHELKLIVDLMYEGGIARMNYSVSDTAEFGGYLSGPRVIDAGTKERMKAILADIQSGEFTRRLVANVENGNTELEGLRKANAEHPIEVTGKKLRDLMSWVDRPITETA</sequence>
<evidence type="ECO:0000255" key="1">
    <source>
        <dbReference type="HAMAP-Rule" id="MF_00435"/>
    </source>
</evidence>
<evidence type="ECO:0000255" key="2">
    <source>
        <dbReference type="PROSITE-ProRule" id="PRU01197"/>
    </source>
</evidence>
<evidence type="ECO:0000255" key="3">
    <source>
        <dbReference type="PROSITE-ProRule" id="PRU01198"/>
    </source>
</evidence>
<organism>
    <name type="scientific">Rhodococcus jostii (strain RHA1)</name>
    <dbReference type="NCBI Taxonomy" id="101510"/>
    <lineage>
        <taxon>Bacteria</taxon>
        <taxon>Bacillati</taxon>
        <taxon>Actinomycetota</taxon>
        <taxon>Actinomycetes</taxon>
        <taxon>Mycobacteriales</taxon>
        <taxon>Nocardiaceae</taxon>
        <taxon>Rhodococcus</taxon>
    </lineage>
</organism>
<name>ILVC_RHOJR</name>
<keyword id="KW-0028">Amino-acid biosynthesis</keyword>
<keyword id="KW-0100">Branched-chain amino acid biosynthesis</keyword>
<keyword id="KW-0460">Magnesium</keyword>
<keyword id="KW-0479">Metal-binding</keyword>
<keyword id="KW-0521">NADP</keyword>
<keyword id="KW-0560">Oxidoreductase</keyword>
<reference key="1">
    <citation type="journal article" date="2006" name="Proc. Natl. Acad. Sci. U.S.A.">
        <title>The complete genome of Rhodococcus sp. RHA1 provides insights into a catabolic powerhouse.</title>
        <authorList>
            <person name="McLeod M.P."/>
            <person name="Warren R.L."/>
            <person name="Hsiao W.W.L."/>
            <person name="Araki N."/>
            <person name="Myhre M."/>
            <person name="Fernandes C."/>
            <person name="Miyazawa D."/>
            <person name="Wong W."/>
            <person name="Lillquist A.L."/>
            <person name="Wang D."/>
            <person name="Dosanjh M."/>
            <person name="Hara H."/>
            <person name="Petrescu A."/>
            <person name="Morin R.D."/>
            <person name="Yang G."/>
            <person name="Stott J.M."/>
            <person name="Schein J.E."/>
            <person name="Shin H."/>
            <person name="Smailus D."/>
            <person name="Siddiqui A.S."/>
            <person name="Marra M.A."/>
            <person name="Jones S.J.M."/>
            <person name="Holt R."/>
            <person name="Brinkman F.S.L."/>
            <person name="Miyauchi K."/>
            <person name="Fukuda M."/>
            <person name="Davies J.E."/>
            <person name="Mohn W.W."/>
            <person name="Eltis L.D."/>
        </authorList>
    </citation>
    <scope>NUCLEOTIDE SEQUENCE [LARGE SCALE GENOMIC DNA]</scope>
    <source>
        <strain>RHA1</strain>
    </source>
</reference>